<gene>
    <name evidence="1" type="primary">rpmE2</name>
    <name type="ordered locus">TC_0291</name>
</gene>
<reference key="1">
    <citation type="journal article" date="2000" name="Nucleic Acids Res.">
        <title>Genome sequences of Chlamydia trachomatis MoPn and Chlamydia pneumoniae AR39.</title>
        <authorList>
            <person name="Read T.D."/>
            <person name="Brunham R.C."/>
            <person name="Shen C."/>
            <person name="Gill S.R."/>
            <person name="Heidelberg J.F."/>
            <person name="White O."/>
            <person name="Hickey E.K."/>
            <person name="Peterson J.D."/>
            <person name="Utterback T.R."/>
            <person name="Berry K.J."/>
            <person name="Bass S."/>
            <person name="Linher K.D."/>
            <person name="Weidman J.F."/>
            <person name="Khouri H.M."/>
            <person name="Craven B."/>
            <person name="Bowman C."/>
            <person name="Dodson R.J."/>
            <person name="Gwinn M.L."/>
            <person name="Nelson W.C."/>
            <person name="DeBoy R.T."/>
            <person name="Kolonay J.F."/>
            <person name="McClarty G."/>
            <person name="Salzberg S.L."/>
            <person name="Eisen J.A."/>
            <person name="Fraser C.M."/>
        </authorList>
    </citation>
    <scope>NUCLEOTIDE SEQUENCE [LARGE SCALE GENOMIC DNA]</scope>
    <source>
        <strain>MoPn / Nigg</strain>
    </source>
</reference>
<sequence length="108" mass="12190">MKKNTHPEYRQVLFVDSSTGYKFVCGSTYQTDKTEVFEGQEYPVCYVSVSSSSHPFFTGSKKLVDAEGRVDKFLKRYSGVKQMAPKPETSVEEVLPKGKKKAPAKKKK</sequence>
<accession>Q9PL17</accession>
<keyword id="KW-0687">Ribonucleoprotein</keyword>
<keyword id="KW-0689">Ribosomal protein</keyword>
<feature type="chain" id="PRO_0000173216" description="Large ribosomal subunit protein bL31B">
    <location>
        <begin position="1"/>
        <end position="108"/>
    </location>
</feature>
<feature type="region of interest" description="Disordered" evidence="2">
    <location>
        <begin position="85"/>
        <end position="108"/>
    </location>
</feature>
<feature type="compositionally biased region" description="Basic residues" evidence="2">
    <location>
        <begin position="97"/>
        <end position="108"/>
    </location>
</feature>
<evidence type="ECO:0000255" key="1">
    <source>
        <dbReference type="HAMAP-Rule" id="MF_00502"/>
    </source>
</evidence>
<evidence type="ECO:0000256" key="2">
    <source>
        <dbReference type="SAM" id="MobiDB-lite"/>
    </source>
</evidence>
<evidence type="ECO:0000305" key="3"/>
<protein>
    <recommendedName>
        <fullName evidence="1">Large ribosomal subunit protein bL31B</fullName>
    </recommendedName>
    <alternativeName>
        <fullName evidence="3">50S ribosomal protein L31 type B</fullName>
    </alternativeName>
</protein>
<organism>
    <name type="scientific">Chlamydia muridarum (strain MoPn / Nigg)</name>
    <dbReference type="NCBI Taxonomy" id="243161"/>
    <lineage>
        <taxon>Bacteria</taxon>
        <taxon>Pseudomonadati</taxon>
        <taxon>Chlamydiota</taxon>
        <taxon>Chlamydiia</taxon>
        <taxon>Chlamydiales</taxon>
        <taxon>Chlamydiaceae</taxon>
        <taxon>Chlamydia/Chlamydophila group</taxon>
        <taxon>Chlamydia</taxon>
    </lineage>
</organism>
<comment type="subunit">
    <text evidence="1">Part of the 50S ribosomal subunit.</text>
</comment>
<comment type="similarity">
    <text evidence="1">Belongs to the bacterial ribosomal protein bL31 family. Type B subfamily.</text>
</comment>
<proteinExistence type="inferred from homology"/>
<name>RL31B_CHLMU</name>
<dbReference type="EMBL" id="AE002160">
    <property type="protein sequence ID" value="AAF39159.1"/>
    <property type="molecule type" value="Genomic_DNA"/>
</dbReference>
<dbReference type="PIR" id="A81720">
    <property type="entry name" value="A81720"/>
</dbReference>
<dbReference type="RefSeq" id="WP_010230059.1">
    <property type="nucleotide sequence ID" value="NZ_CP063055.1"/>
</dbReference>
<dbReference type="SMR" id="Q9PL17"/>
<dbReference type="GeneID" id="1246461"/>
<dbReference type="KEGG" id="cmu:TC_0291"/>
<dbReference type="eggNOG" id="COG0254">
    <property type="taxonomic scope" value="Bacteria"/>
</dbReference>
<dbReference type="HOGENOM" id="CLU_114306_2_0_0"/>
<dbReference type="OrthoDB" id="9803251at2"/>
<dbReference type="Proteomes" id="UP000000800">
    <property type="component" value="Chromosome"/>
</dbReference>
<dbReference type="GO" id="GO:1990904">
    <property type="term" value="C:ribonucleoprotein complex"/>
    <property type="evidence" value="ECO:0007669"/>
    <property type="project" value="UniProtKB-KW"/>
</dbReference>
<dbReference type="GO" id="GO:0005840">
    <property type="term" value="C:ribosome"/>
    <property type="evidence" value="ECO:0007669"/>
    <property type="project" value="UniProtKB-KW"/>
</dbReference>
<dbReference type="GO" id="GO:0003735">
    <property type="term" value="F:structural constituent of ribosome"/>
    <property type="evidence" value="ECO:0007669"/>
    <property type="project" value="InterPro"/>
</dbReference>
<dbReference type="GO" id="GO:0006412">
    <property type="term" value="P:translation"/>
    <property type="evidence" value="ECO:0007669"/>
    <property type="project" value="UniProtKB-UniRule"/>
</dbReference>
<dbReference type="Gene3D" id="4.10.830.30">
    <property type="entry name" value="Ribosomal protein L31"/>
    <property type="match status" value="1"/>
</dbReference>
<dbReference type="HAMAP" id="MF_00502">
    <property type="entry name" value="Ribosomal_bL31_2"/>
    <property type="match status" value="1"/>
</dbReference>
<dbReference type="InterPro" id="IPR034704">
    <property type="entry name" value="Ribosomal_bL28/bL31-like_sf"/>
</dbReference>
<dbReference type="InterPro" id="IPR002150">
    <property type="entry name" value="Ribosomal_bL31"/>
</dbReference>
<dbReference type="InterPro" id="IPR027493">
    <property type="entry name" value="Ribosomal_bL31_B"/>
</dbReference>
<dbReference type="InterPro" id="IPR042105">
    <property type="entry name" value="Ribosomal_bL31_sf"/>
</dbReference>
<dbReference type="NCBIfam" id="TIGR00105">
    <property type="entry name" value="L31"/>
    <property type="match status" value="1"/>
</dbReference>
<dbReference type="NCBIfam" id="NF002462">
    <property type="entry name" value="PRK01678.1"/>
    <property type="match status" value="1"/>
</dbReference>
<dbReference type="PANTHER" id="PTHR33280">
    <property type="entry name" value="50S RIBOSOMAL PROTEIN L31, CHLOROPLASTIC"/>
    <property type="match status" value="1"/>
</dbReference>
<dbReference type="PANTHER" id="PTHR33280:SF1">
    <property type="entry name" value="LARGE RIBOSOMAL SUBUNIT PROTEIN BL31C"/>
    <property type="match status" value="1"/>
</dbReference>
<dbReference type="Pfam" id="PF01197">
    <property type="entry name" value="Ribosomal_L31"/>
    <property type="match status" value="1"/>
</dbReference>
<dbReference type="PRINTS" id="PR01249">
    <property type="entry name" value="RIBOSOMALL31"/>
</dbReference>
<dbReference type="SUPFAM" id="SSF143800">
    <property type="entry name" value="L28p-like"/>
    <property type="match status" value="1"/>
</dbReference>
<dbReference type="PROSITE" id="PS01143">
    <property type="entry name" value="RIBOSOMAL_L31"/>
    <property type="match status" value="1"/>
</dbReference>